<dbReference type="EMBL" id="CP000872">
    <property type="protein sequence ID" value="ABX62304.1"/>
    <property type="molecule type" value="Genomic_DNA"/>
</dbReference>
<dbReference type="RefSeq" id="WP_002964361.1">
    <property type="nucleotide sequence ID" value="NC_010103.1"/>
</dbReference>
<dbReference type="SMR" id="A9M5P9"/>
<dbReference type="GeneID" id="93016440"/>
<dbReference type="KEGG" id="bcs:BCAN_A1255"/>
<dbReference type="HOGENOM" id="CLU_041575_5_1_5"/>
<dbReference type="PhylomeDB" id="A9M5P9"/>
<dbReference type="Proteomes" id="UP000001385">
    <property type="component" value="Chromosome I"/>
</dbReference>
<dbReference type="GO" id="GO:1990904">
    <property type="term" value="C:ribonucleoprotein complex"/>
    <property type="evidence" value="ECO:0007669"/>
    <property type="project" value="UniProtKB-KW"/>
</dbReference>
<dbReference type="GO" id="GO:0005840">
    <property type="term" value="C:ribosome"/>
    <property type="evidence" value="ECO:0007669"/>
    <property type="project" value="UniProtKB-KW"/>
</dbReference>
<dbReference type="GO" id="GO:0019843">
    <property type="term" value="F:rRNA binding"/>
    <property type="evidence" value="ECO:0007669"/>
    <property type="project" value="UniProtKB-UniRule"/>
</dbReference>
<dbReference type="GO" id="GO:0003735">
    <property type="term" value="F:structural constituent of ribosome"/>
    <property type="evidence" value="ECO:0007669"/>
    <property type="project" value="InterPro"/>
</dbReference>
<dbReference type="GO" id="GO:0006412">
    <property type="term" value="P:translation"/>
    <property type="evidence" value="ECO:0007669"/>
    <property type="project" value="UniProtKB-UniRule"/>
</dbReference>
<dbReference type="Gene3D" id="3.40.1370.10">
    <property type="match status" value="1"/>
</dbReference>
<dbReference type="HAMAP" id="MF_01328_B">
    <property type="entry name" value="Ribosomal_uL4_B"/>
    <property type="match status" value="1"/>
</dbReference>
<dbReference type="InterPro" id="IPR002136">
    <property type="entry name" value="Ribosomal_uL4"/>
</dbReference>
<dbReference type="InterPro" id="IPR013005">
    <property type="entry name" value="Ribosomal_uL4-like"/>
</dbReference>
<dbReference type="InterPro" id="IPR023574">
    <property type="entry name" value="Ribosomal_uL4_dom_sf"/>
</dbReference>
<dbReference type="NCBIfam" id="TIGR03953">
    <property type="entry name" value="rplD_bact"/>
    <property type="match status" value="1"/>
</dbReference>
<dbReference type="PANTHER" id="PTHR10746">
    <property type="entry name" value="50S RIBOSOMAL PROTEIN L4"/>
    <property type="match status" value="1"/>
</dbReference>
<dbReference type="PANTHER" id="PTHR10746:SF6">
    <property type="entry name" value="LARGE RIBOSOMAL SUBUNIT PROTEIN UL4M"/>
    <property type="match status" value="1"/>
</dbReference>
<dbReference type="Pfam" id="PF00573">
    <property type="entry name" value="Ribosomal_L4"/>
    <property type="match status" value="1"/>
</dbReference>
<dbReference type="SUPFAM" id="SSF52166">
    <property type="entry name" value="Ribosomal protein L4"/>
    <property type="match status" value="1"/>
</dbReference>
<sequence>MDLTITTLEGKDAGKVKLNEEIFGLDPRDDILQRVVRWQLARRQQGSHKAQGRGDVSRTGSKMYKQKGTGRARHHSARAPQFRGGGQAHGPVVRNHDHDLPKKVRALGLRHALSAKAKASDLIIIDDLASADAKTKQLVSQFAKLGLENALLIGGAEIDANFQRAASNIPNIDVLPVQGINVYDILRRGKLVLSKAAVEALEERFK</sequence>
<protein>
    <recommendedName>
        <fullName evidence="1">Large ribosomal subunit protein uL4</fullName>
    </recommendedName>
    <alternativeName>
        <fullName evidence="3">50S ribosomal protein L4</fullName>
    </alternativeName>
</protein>
<evidence type="ECO:0000255" key="1">
    <source>
        <dbReference type="HAMAP-Rule" id="MF_01328"/>
    </source>
</evidence>
<evidence type="ECO:0000256" key="2">
    <source>
        <dbReference type="SAM" id="MobiDB-lite"/>
    </source>
</evidence>
<evidence type="ECO:0000305" key="3"/>
<reference key="1">
    <citation type="submission" date="2007-10" db="EMBL/GenBank/DDBJ databases">
        <title>Brucella canis ATCC 23365 whole genome shotgun sequencing project.</title>
        <authorList>
            <person name="Setubal J.C."/>
            <person name="Bowns C."/>
            <person name="Boyle S."/>
            <person name="Crasta O.R."/>
            <person name="Czar M.J."/>
            <person name="Dharmanolla C."/>
            <person name="Gillespie J.J."/>
            <person name="Kenyon R.W."/>
            <person name="Lu J."/>
            <person name="Mane S."/>
            <person name="Mohapatra S."/>
            <person name="Nagrani S."/>
            <person name="Purkayastha A."/>
            <person name="Rajasimha H.K."/>
            <person name="Shallom J.M."/>
            <person name="Shallom S."/>
            <person name="Shukla M."/>
            <person name="Snyder E.E."/>
            <person name="Sobral B.W."/>
            <person name="Wattam A.R."/>
            <person name="Will R."/>
            <person name="Williams K."/>
            <person name="Yoo H."/>
            <person name="Bruce D."/>
            <person name="Detter C."/>
            <person name="Munk C."/>
            <person name="Brettin T.S."/>
        </authorList>
    </citation>
    <scope>NUCLEOTIDE SEQUENCE [LARGE SCALE GENOMIC DNA]</scope>
    <source>
        <strain>ATCC 23365 / NCTC 10854 / RM-666</strain>
    </source>
</reference>
<proteinExistence type="inferred from homology"/>
<name>RL4_BRUC2</name>
<feature type="chain" id="PRO_1000086509" description="Large ribosomal subunit protein uL4">
    <location>
        <begin position="1"/>
        <end position="206"/>
    </location>
</feature>
<feature type="region of interest" description="Disordered" evidence="2">
    <location>
        <begin position="42"/>
        <end position="94"/>
    </location>
</feature>
<feature type="compositionally biased region" description="Basic residues" evidence="2">
    <location>
        <begin position="64"/>
        <end position="77"/>
    </location>
</feature>
<accession>A9M5P9</accession>
<comment type="function">
    <text evidence="1">One of the primary rRNA binding proteins, this protein initially binds near the 5'-end of the 23S rRNA. It is important during the early stages of 50S assembly. It makes multiple contacts with different domains of the 23S rRNA in the assembled 50S subunit and ribosome.</text>
</comment>
<comment type="function">
    <text evidence="1">Forms part of the polypeptide exit tunnel.</text>
</comment>
<comment type="subunit">
    <text evidence="1">Part of the 50S ribosomal subunit.</text>
</comment>
<comment type="similarity">
    <text evidence="1">Belongs to the universal ribosomal protein uL4 family.</text>
</comment>
<organism>
    <name type="scientific">Brucella canis (strain ATCC 23365 / NCTC 10854 / RM-666)</name>
    <dbReference type="NCBI Taxonomy" id="483179"/>
    <lineage>
        <taxon>Bacteria</taxon>
        <taxon>Pseudomonadati</taxon>
        <taxon>Pseudomonadota</taxon>
        <taxon>Alphaproteobacteria</taxon>
        <taxon>Hyphomicrobiales</taxon>
        <taxon>Brucellaceae</taxon>
        <taxon>Brucella/Ochrobactrum group</taxon>
        <taxon>Brucella</taxon>
    </lineage>
</organism>
<gene>
    <name evidence="1" type="primary">rplD</name>
    <name type="ordered locus">BCAN_A1255</name>
</gene>
<keyword id="KW-1185">Reference proteome</keyword>
<keyword id="KW-0687">Ribonucleoprotein</keyword>
<keyword id="KW-0689">Ribosomal protein</keyword>
<keyword id="KW-0694">RNA-binding</keyword>
<keyword id="KW-0699">rRNA-binding</keyword>